<proteinExistence type="inferred from homology"/>
<protein>
    <recommendedName>
        <fullName evidence="1">UPF0597 protein YhaM</fullName>
    </recommendedName>
</protein>
<comment type="similarity">
    <text evidence="1">Belongs to the UPF0597 family.</text>
</comment>
<name>YHAM_ECO55</name>
<keyword id="KW-1185">Reference proteome</keyword>
<feature type="chain" id="PRO_1000188452" description="UPF0597 protein YhaM">
    <location>
        <begin position="1"/>
        <end position="436"/>
    </location>
</feature>
<organism>
    <name type="scientific">Escherichia coli (strain 55989 / EAEC)</name>
    <dbReference type="NCBI Taxonomy" id="585055"/>
    <lineage>
        <taxon>Bacteria</taxon>
        <taxon>Pseudomonadati</taxon>
        <taxon>Pseudomonadota</taxon>
        <taxon>Gammaproteobacteria</taxon>
        <taxon>Enterobacterales</taxon>
        <taxon>Enterobacteriaceae</taxon>
        <taxon>Escherichia</taxon>
    </lineage>
</organism>
<sequence length="436" mass="45382">MFDSTLNPLWQRYILAVQEEVKPALGCTEPISLALAAAVAAAELEGPVERVEAWVSPNLMKNGLGVTVPGTGMVGLPIAAALGALGGNANAGLEVLKDATAQAIADAKALLAAGKVSVKIQEPCNEILFSRAKVWHGEKWACVTIVGGHTNIVHIETHNGVVFTQQACVAEGEQESPLTVLSRTTLAEILKFVNEVPFAAIRFILDSAKLNCALSQEGLSGKWGLHIGATLEKQCERGLLAKDLSSSIVIRTSAASDARMGGATLPAMSNSGSGNQGITATMPVVVVAEHFGADDERLARALMLSHLSAIYIHNQLPRLSALCAATTAAMGAAAGMAWLVDGRYETISMAISSMIGDVSGMICDGASNSCAMKVSTSASAAWKAVLMALDDTAVTGNEGIVAHDVEQSIANLCALASHSMQQTDRQIIEIMASKAR</sequence>
<accession>B7LH44</accession>
<dbReference type="EMBL" id="CU928145">
    <property type="protein sequence ID" value="CAU99699.1"/>
    <property type="molecule type" value="Genomic_DNA"/>
</dbReference>
<dbReference type="KEGG" id="eck:EC55989_3526"/>
<dbReference type="HOGENOM" id="CLU_051840_0_0_6"/>
<dbReference type="Proteomes" id="UP000000746">
    <property type="component" value="Chromosome"/>
</dbReference>
<dbReference type="GO" id="GO:0080146">
    <property type="term" value="F:L-cysteine desulfhydrase activity"/>
    <property type="evidence" value="ECO:0007669"/>
    <property type="project" value="TreeGrafter"/>
</dbReference>
<dbReference type="GO" id="GO:0019450">
    <property type="term" value="P:L-cysteine catabolic process to pyruvate"/>
    <property type="evidence" value="ECO:0007669"/>
    <property type="project" value="TreeGrafter"/>
</dbReference>
<dbReference type="HAMAP" id="MF_01845">
    <property type="entry name" value="UPF0597"/>
    <property type="match status" value="1"/>
</dbReference>
<dbReference type="InterPro" id="IPR005130">
    <property type="entry name" value="Ser_deHydtase-like_asu"/>
</dbReference>
<dbReference type="InterPro" id="IPR021144">
    <property type="entry name" value="UPF0597"/>
</dbReference>
<dbReference type="PANTHER" id="PTHR30501">
    <property type="entry name" value="UPF0597 PROTEIN YHAM"/>
    <property type="match status" value="1"/>
</dbReference>
<dbReference type="PANTHER" id="PTHR30501:SF2">
    <property type="entry name" value="UPF0597 PROTEIN YHAM"/>
    <property type="match status" value="1"/>
</dbReference>
<dbReference type="Pfam" id="PF03313">
    <property type="entry name" value="SDH_alpha"/>
    <property type="match status" value="1"/>
</dbReference>
<dbReference type="PIRSF" id="PIRSF006054">
    <property type="entry name" value="UCP006054"/>
    <property type="match status" value="1"/>
</dbReference>
<evidence type="ECO:0000255" key="1">
    <source>
        <dbReference type="HAMAP-Rule" id="MF_01845"/>
    </source>
</evidence>
<gene>
    <name evidence="1" type="primary">yhaM</name>
    <name type="ordered locus">EC55989_3526</name>
</gene>
<reference key="1">
    <citation type="journal article" date="2009" name="PLoS Genet.">
        <title>Organised genome dynamics in the Escherichia coli species results in highly diverse adaptive paths.</title>
        <authorList>
            <person name="Touchon M."/>
            <person name="Hoede C."/>
            <person name="Tenaillon O."/>
            <person name="Barbe V."/>
            <person name="Baeriswyl S."/>
            <person name="Bidet P."/>
            <person name="Bingen E."/>
            <person name="Bonacorsi S."/>
            <person name="Bouchier C."/>
            <person name="Bouvet O."/>
            <person name="Calteau A."/>
            <person name="Chiapello H."/>
            <person name="Clermont O."/>
            <person name="Cruveiller S."/>
            <person name="Danchin A."/>
            <person name="Diard M."/>
            <person name="Dossat C."/>
            <person name="Karoui M.E."/>
            <person name="Frapy E."/>
            <person name="Garry L."/>
            <person name="Ghigo J.M."/>
            <person name="Gilles A.M."/>
            <person name="Johnson J."/>
            <person name="Le Bouguenec C."/>
            <person name="Lescat M."/>
            <person name="Mangenot S."/>
            <person name="Martinez-Jehanne V."/>
            <person name="Matic I."/>
            <person name="Nassif X."/>
            <person name="Oztas S."/>
            <person name="Petit M.A."/>
            <person name="Pichon C."/>
            <person name="Rouy Z."/>
            <person name="Ruf C.S."/>
            <person name="Schneider D."/>
            <person name="Tourret J."/>
            <person name="Vacherie B."/>
            <person name="Vallenet D."/>
            <person name="Medigue C."/>
            <person name="Rocha E.P.C."/>
            <person name="Denamur E."/>
        </authorList>
    </citation>
    <scope>NUCLEOTIDE SEQUENCE [LARGE SCALE GENOMIC DNA]</scope>
    <source>
        <strain>55989 / EAEC</strain>
    </source>
</reference>